<feature type="chain" id="PRO_0000330601" description="Uncharacterized protein ORF12">
    <location>
        <begin position="1"/>
        <end position="250"/>
    </location>
</feature>
<feature type="transmembrane region" description="Helical" evidence="1">
    <location>
        <begin position="230"/>
        <end position="250"/>
    </location>
</feature>
<feature type="region of interest" description="Disordered" evidence="2">
    <location>
        <begin position="182"/>
        <end position="205"/>
    </location>
</feature>
<feature type="compositionally biased region" description="Pro residues" evidence="2">
    <location>
        <begin position="190"/>
        <end position="201"/>
    </location>
</feature>
<proteinExistence type="inferred from homology"/>
<gene>
    <name type="ORF">ORF12</name>
</gene>
<dbReference type="EMBL" id="AM398843">
    <property type="protein sequence ID" value="CAL44612.1"/>
    <property type="molecule type" value="Genomic_DNA"/>
</dbReference>
<dbReference type="KEGG" id="vg:4306179"/>
<dbReference type="Proteomes" id="UP000008030">
    <property type="component" value="Genome"/>
</dbReference>
<dbReference type="GO" id="GO:0016020">
    <property type="term" value="C:membrane"/>
    <property type="evidence" value="ECO:0007669"/>
    <property type="project" value="UniProtKB-SubCell"/>
</dbReference>
<sequence>MMSSVTSEIIHTDVSGQRVRPPLTYCNGELGLKNSEDAAYFCLEKFKSFNEVPDFQYIYLTLSLHVPPPTRKYLLKFHKRLLNVCRLCGETGDLVGGRVLVSGVSQKTADIVVSAKSNGEVLYDWSNFFKSTVRVRCRYTIAKLYNNKAAMREIAKQKNWQTTYPNLEAYRKLNDAAKNSKHTPIVSIQTPPPPAPTPNRPDVPASKNVVITQRYQKPVEKIEDSRLETTRISVIPLLSVLLLVIIIILL</sequence>
<organism>
    <name type="scientific">Spodoptera frugiperda ascovirus 1a</name>
    <name type="common">SfAV-1a</name>
    <dbReference type="NCBI Taxonomy" id="113370"/>
    <lineage>
        <taxon>Viruses</taxon>
        <taxon>Varidnaviria</taxon>
        <taxon>Bamfordvirae</taxon>
        <taxon>Nucleocytoviricota</taxon>
        <taxon>Megaviricetes</taxon>
        <taxon>Pimascovirales</taxon>
        <taxon>Ascoviridae</taxon>
        <taxon>Ascovirus</taxon>
        <taxon>Ascovirus sfav1a</taxon>
    </lineage>
</organism>
<keyword id="KW-0472">Membrane</keyword>
<keyword id="KW-1185">Reference proteome</keyword>
<keyword id="KW-0812">Transmembrane</keyword>
<keyword id="KW-1133">Transmembrane helix</keyword>
<protein>
    <recommendedName>
        <fullName>Uncharacterized protein ORF12</fullName>
    </recommendedName>
</protein>
<evidence type="ECO:0000255" key="1"/>
<evidence type="ECO:0000256" key="2">
    <source>
        <dbReference type="SAM" id="MobiDB-lite"/>
    </source>
</evidence>
<evidence type="ECO:0000305" key="3"/>
<organismHost>
    <name type="scientific">Spodoptera frugiperda</name>
    <name type="common">Fall armyworm</name>
    <dbReference type="NCBI Taxonomy" id="7108"/>
</organismHost>
<comment type="subcellular location">
    <subcellularLocation>
        <location evidence="3">Membrane</location>
        <topology evidence="3">Single-pass membrane protein</topology>
    </subcellularLocation>
</comment>
<comment type="similarity">
    <text evidence="3">Belongs to the ascovirus HvAV ORF18 family.</text>
</comment>
<accession>Q0E589</accession>
<reference key="1">
    <citation type="journal article" date="2006" name="J. Virol.">
        <title>Genomic sequence of Spodoptera frugiperda Ascovirus 1a, an enveloped, double-stranded DNA insect virus that manipulates apoptosis for viral reproduction.</title>
        <authorList>
            <person name="Bideshi D.K."/>
            <person name="Demattei M.V."/>
            <person name="Rouleux-Bonnin F."/>
            <person name="Stasiak K."/>
            <person name="Tan Y."/>
            <person name="Bigot S."/>
            <person name="Bigot Y."/>
            <person name="Federici B.A."/>
        </authorList>
    </citation>
    <scope>NUCLEOTIDE SEQUENCE [LARGE SCALE GENOMIC DNA]</scope>
</reference>
<name>Y012_SFAVA</name>